<comment type="function">
    <text evidence="2">Chemotactic factor that mediates inflammatory response by attracting neutrophils, basophils, and T-cells to clear pathogens and protect the host from infection. Also plays an important role in neutrophil activation. Released in response to an inflammatory stimulus, exerts its effect by binding to the G-protein-coupled receptors CXCR1 and CXCR2, primarily found in neutrophils, monocytes and endothelial cells. G-protein heterotrimer (alpha, beta, gamma subunits) constitutively binds to CXCR1/CXCR2 receptor and activation by IL8 leads to beta and gamma subunits release from Galpha (GNAI2 in neutrophils) and activation of several downstream signaling pathways including PI3K and MAPK pathways.</text>
</comment>
<comment type="subunit">
    <text evidence="2">Homodimer.</text>
</comment>
<comment type="subcellular location">
    <subcellularLocation>
        <location>Secreted</location>
    </subcellularLocation>
</comment>
<comment type="PTM">
    <text evidence="1">Citrullination at Arg-27 prevents proteolysis, and dampens tissue inflammation, it also enhances leukocytosis, possibly through impaired chemokine clearance from the blood circulation.</text>
</comment>
<comment type="similarity">
    <text evidence="3">Belongs to the intercrine alpha (chemokine CxC) family.</text>
</comment>
<keyword id="KW-0145">Chemotaxis</keyword>
<keyword id="KW-0164">Citrullination</keyword>
<keyword id="KW-0202">Cytokine</keyword>
<keyword id="KW-1015">Disulfide bond</keyword>
<keyword id="KW-0395">Inflammatory response</keyword>
<keyword id="KW-1185">Reference proteome</keyword>
<keyword id="KW-0964">Secreted</keyword>
<keyword id="KW-0732">Signal</keyword>
<name>IL8_TURTR</name>
<reference key="1">
    <citation type="journal article" date="2003" name="J. Vet. Med. Sci.">
        <title>Molecular cloning and expression of bottlenose dolphin (Tursiops truncatus) interleukin-8.</title>
        <authorList>
            <person name="Itou T."/>
            <person name="Yosida Y."/>
            <person name="Shoji Y."/>
            <person name="Sugisawa H."/>
            <person name="Endo T."/>
            <person name="Sakai T."/>
        </authorList>
    </citation>
    <scope>NUCLEOTIDE SEQUENCE [MRNA]</scope>
</reference>
<sequence length="101" mass="11371">MTSKLAIALLAAFLLSAALCKAAVLSRMTSELRCQCINIHSTPFHPKFIRELRVIESGPHCENSEIIVKLVNGKEVCLNPKEKWVQKVVQIFLKRAEKKDP</sequence>
<organism>
    <name type="scientific">Tursiops truncatus</name>
    <name type="common">Atlantic bottle-nosed dolphin</name>
    <name type="synonym">Delphinus truncatus</name>
    <dbReference type="NCBI Taxonomy" id="9739"/>
    <lineage>
        <taxon>Eukaryota</taxon>
        <taxon>Metazoa</taxon>
        <taxon>Chordata</taxon>
        <taxon>Craniata</taxon>
        <taxon>Vertebrata</taxon>
        <taxon>Euteleostomi</taxon>
        <taxon>Mammalia</taxon>
        <taxon>Eutheria</taxon>
        <taxon>Laurasiatheria</taxon>
        <taxon>Artiodactyla</taxon>
        <taxon>Whippomorpha</taxon>
        <taxon>Cetacea</taxon>
        <taxon>Odontoceti</taxon>
        <taxon>Delphinidae</taxon>
        <taxon>Tursiops</taxon>
    </lineage>
</organism>
<gene>
    <name type="primary">CXCL8</name>
    <name type="synonym">IL8</name>
</gene>
<dbReference type="EMBL" id="AB096002">
    <property type="protein sequence ID" value="BAC81421.1"/>
    <property type="molecule type" value="mRNA"/>
</dbReference>
<dbReference type="RefSeq" id="NP_001267571.1">
    <property type="nucleotide sequence ID" value="NM_001280642.1"/>
</dbReference>
<dbReference type="SMR" id="Q7YRB5"/>
<dbReference type="FunCoup" id="Q7YRB5">
    <property type="interactions" value="406"/>
</dbReference>
<dbReference type="GeneID" id="101331085"/>
<dbReference type="CTD" id="3576"/>
<dbReference type="InParanoid" id="Q7YRB5"/>
<dbReference type="OrthoDB" id="9937393at2759"/>
<dbReference type="Proteomes" id="UP000245320">
    <property type="component" value="Chromosome 5"/>
</dbReference>
<dbReference type="GO" id="GO:0005615">
    <property type="term" value="C:extracellular space"/>
    <property type="evidence" value="ECO:0007669"/>
    <property type="project" value="UniProtKB-KW"/>
</dbReference>
<dbReference type="GO" id="GO:0008009">
    <property type="term" value="F:chemokine activity"/>
    <property type="evidence" value="ECO:0007669"/>
    <property type="project" value="InterPro"/>
</dbReference>
<dbReference type="GO" id="GO:0006955">
    <property type="term" value="P:immune response"/>
    <property type="evidence" value="ECO:0007669"/>
    <property type="project" value="InterPro"/>
</dbReference>
<dbReference type="GO" id="GO:0006954">
    <property type="term" value="P:inflammatory response"/>
    <property type="evidence" value="ECO:0007669"/>
    <property type="project" value="UniProtKB-KW"/>
</dbReference>
<dbReference type="CDD" id="cd00273">
    <property type="entry name" value="Chemokine_CXC"/>
    <property type="match status" value="1"/>
</dbReference>
<dbReference type="FunFam" id="2.40.50.40:FF:000004">
    <property type="entry name" value="C-X-C motif chemokine"/>
    <property type="match status" value="1"/>
</dbReference>
<dbReference type="Gene3D" id="2.40.50.40">
    <property type="match status" value="1"/>
</dbReference>
<dbReference type="InterPro" id="IPR039809">
    <property type="entry name" value="Chemokine_b/g/d"/>
</dbReference>
<dbReference type="InterPro" id="IPR001089">
    <property type="entry name" value="Chemokine_CXC"/>
</dbReference>
<dbReference type="InterPro" id="IPR018048">
    <property type="entry name" value="Chemokine_CXC_CS"/>
</dbReference>
<dbReference type="InterPro" id="IPR001811">
    <property type="entry name" value="Chemokine_IL8-like_dom"/>
</dbReference>
<dbReference type="InterPro" id="IPR033899">
    <property type="entry name" value="CXC_Chemokine_domain"/>
</dbReference>
<dbReference type="InterPro" id="IPR036048">
    <property type="entry name" value="Interleukin_8-like_sf"/>
</dbReference>
<dbReference type="PANTHER" id="PTHR12015:SF200">
    <property type="entry name" value="INTERLEUKIN-8"/>
    <property type="match status" value="1"/>
</dbReference>
<dbReference type="PANTHER" id="PTHR12015">
    <property type="entry name" value="SMALL INDUCIBLE CYTOKINE A"/>
    <property type="match status" value="1"/>
</dbReference>
<dbReference type="Pfam" id="PF00048">
    <property type="entry name" value="IL8"/>
    <property type="match status" value="1"/>
</dbReference>
<dbReference type="PRINTS" id="PR00436">
    <property type="entry name" value="INTERLEUKIN8"/>
</dbReference>
<dbReference type="PRINTS" id="PR00437">
    <property type="entry name" value="SMALLCYTKCXC"/>
</dbReference>
<dbReference type="SMART" id="SM00199">
    <property type="entry name" value="SCY"/>
    <property type="match status" value="1"/>
</dbReference>
<dbReference type="SUPFAM" id="SSF54117">
    <property type="entry name" value="Interleukin 8-like chemokines"/>
    <property type="match status" value="1"/>
</dbReference>
<dbReference type="PROSITE" id="PS00471">
    <property type="entry name" value="SMALL_CYTOKINES_CXC"/>
    <property type="match status" value="1"/>
</dbReference>
<protein>
    <recommendedName>
        <fullName>Interleukin-8</fullName>
        <shortName>IL-8</shortName>
    </recommendedName>
    <alternativeName>
        <fullName>C-X-C motif chemokine 8</fullName>
    </alternativeName>
    <alternativeName>
        <fullName>Chemokine (C-X-C motif) ligand 8</fullName>
    </alternativeName>
</protein>
<accession>Q7YRB5</accession>
<evidence type="ECO:0000250" key="1"/>
<evidence type="ECO:0000250" key="2">
    <source>
        <dbReference type="UniProtKB" id="P10145"/>
    </source>
</evidence>
<evidence type="ECO:0000305" key="3"/>
<proteinExistence type="inferred from homology"/>
<feature type="signal peptide" evidence="1">
    <location>
        <begin position="1"/>
        <end position="22"/>
    </location>
</feature>
<feature type="chain" id="PRO_0000005137" description="Interleukin-8">
    <location>
        <begin position="23"/>
        <end position="101"/>
    </location>
</feature>
<feature type="modified residue" description="Citrulline" evidence="1">
    <location>
        <position position="27"/>
    </location>
</feature>
<feature type="disulfide bond" evidence="1">
    <location>
        <begin position="34"/>
        <end position="61"/>
    </location>
</feature>
<feature type="disulfide bond" evidence="1">
    <location>
        <begin position="36"/>
        <end position="77"/>
    </location>
</feature>